<dbReference type="EC" id="5.1.3.20" evidence="6"/>
<dbReference type="EMBL" id="M33577">
    <property type="protein sequence ID" value="AAA24525.1"/>
    <property type="molecule type" value="Genomic_DNA"/>
</dbReference>
<dbReference type="EMBL" id="X54492">
    <property type="protein sequence ID" value="CAA38364.1"/>
    <property type="molecule type" value="Genomic_DNA"/>
</dbReference>
<dbReference type="EMBL" id="U00039">
    <property type="protein sequence ID" value="AAB18596.1"/>
    <property type="molecule type" value="Genomic_DNA"/>
</dbReference>
<dbReference type="EMBL" id="U00096">
    <property type="protein sequence ID" value="AAC76643.1"/>
    <property type="molecule type" value="Genomic_DNA"/>
</dbReference>
<dbReference type="EMBL" id="AP009048">
    <property type="protein sequence ID" value="BAE77673.1"/>
    <property type="molecule type" value="Genomic_DNA"/>
</dbReference>
<dbReference type="PIR" id="JU0299">
    <property type="entry name" value="JU0299"/>
</dbReference>
<dbReference type="RefSeq" id="NP_418076.1">
    <property type="nucleotide sequence ID" value="NC_000913.3"/>
</dbReference>
<dbReference type="RefSeq" id="WP_000587764.1">
    <property type="nucleotide sequence ID" value="NZ_LN832404.1"/>
</dbReference>
<dbReference type="PDB" id="1EQ2">
    <property type="method" value="X-ray"/>
    <property type="resolution" value="2.00 A"/>
    <property type="chains" value="A/B/C/D/E/F/G/H/I/J=1-310"/>
</dbReference>
<dbReference type="PDB" id="2X6T">
    <property type="method" value="X-ray"/>
    <property type="resolution" value="2.36 A"/>
    <property type="chains" value="A/B/C/D/E/F/G/H/I/J=1-310"/>
</dbReference>
<dbReference type="PDBsum" id="1EQ2"/>
<dbReference type="PDBsum" id="2X6T"/>
<dbReference type="SMR" id="P67910"/>
<dbReference type="BioGRID" id="4263293">
    <property type="interactions" value="563"/>
</dbReference>
<dbReference type="DIP" id="DIP-35958N"/>
<dbReference type="FunCoup" id="P67910">
    <property type="interactions" value="440"/>
</dbReference>
<dbReference type="IntAct" id="P67910">
    <property type="interactions" value="40"/>
</dbReference>
<dbReference type="STRING" id="511145.b3619"/>
<dbReference type="DrugBank" id="DB01774">
    <property type="generic name" value="Adenosine-5'-Monophosphate Glucopyranosyl-Monophosphate Ester"/>
</dbReference>
<dbReference type="DrugBank" id="DB03461">
    <property type="generic name" value="Nicotinamide adenine dinucleotide phosphate"/>
</dbReference>
<dbReference type="iPTMnet" id="P67910"/>
<dbReference type="jPOST" id="P67910"/>
<dbReference type="PaxDb" id="511145-b3619"/>
<dbReference type="EnsemblBacteria" id="AAC76643">
    <property type="protein sequence ID" value="AAC76643"/>
    <property type="gene ID" value="b3619"/>
</dbReference>
<dbReference type="GeneID" id="86944394"/>
<dbReference type="GeneID" id="948134"/>
<dbReference type="KEGG" id="ecj:JW3594"/>
<dbReference type="KEGG" id="eco:b3619"/>
<dbReference type="KEGG" id="ecoc:C3026_19620"/>
<dbReference type="PATRIC" id="fig|1411691.4.peg.3087"/>
<dbReference type="EchoBASE" id="EB0831"/>
<dbReference type="eggNOG" id="COG0451">
    <property type="taxonomic scope" value="Bacteria"/>
</dbReference>
<dbReference type="HOGENOM" id="CLU_007383_1_3_6"/>
<dbReference type="InParanoid" id="P67910"/>
<dbReference type="OMA" id="FSKLCMD"/>
<dbReference type="OrthoDB" id="9803010at2"/>
<dbReference type="PhylomeDB" id="P67910"/>
<dbReference type="BioCyc" id="EcoCyc:EG10838-MONOMER"/>
<dbReference type="BioCyc" id="MetaCyc:EG10838-MONOMER"/>
<dbReference type="BRENDA" id="5.1.3.20">
    <property type="organism ID" value="2026"/>
</dbReference>
<dbReference type="SABIO-RK" id="P67910"/>
<dbReference type="UniPathway" id="UPA00356">
    <property type="reaction ID" value="UER00440"/>
</dbReference>
<dbReference type="UniPathway" id="UPA00958"/>
<dbReference type="EvolutionaryTrace" id="P67910"/>
<dbReference type="PRO" id="PR:P67910"/>
<dbReference type="Proteomes" id="UP000000625">
    <property type="component" value="Chromosome"/>
</dbReference>
<dbReference type="GO" id="GO:0005829">
    <property type="term" value="C:cytosol"/>
    <property type="evidence" value="ECO:0000314"/>
    <property type="project" value="EcoCyc"/>
</dbReference>
<dbReference type="GO" id="GO:0016020">
    <property type="term" value="C:membrane"/>
    <property type="evidence" value="ECO:0007005"/>
    <property type="project" value="UniProtKB"/>
</dbReference>
<dbReference type="GO" id="GO:0008712">
    <property type="term" value="F:ADP-glyceromanno-heptose 6-epimerase activity"/>
    <property type="evidence" value="ECO:0000314"/>
    <property type="project" value="EcoCyc"/>
</dbReference>
<dbReference type="GO" id="GO:0070401">
    <property type="term" value="F:NADP+ binding"/>
    <property type="evidence" value="ECO:0000314"/>
    <property type="project" value="EcoCyc"/>
</dbReference>
<dbReference type="GO" id="GO:0097171">
    <property type="term" value="P:ADP-L-glycero-beta-D-manno-heptose biosynthetic process"/>
    <property type="evidence" value="ECO:0007669"/>
    <property type="project" value="UniProtKB-UniPathway"/>
</dbReference>
<dbReference type="GO" id="GO:0009244">
    <property type="term" value="P:lipopolysaccharide core region biosynthetic process"/>
    <property type="evidence" value="ECO:0000315"/>
    <property type="project" value="EcoCyc"/>
</dbReference>
<dbReference type="CDD" id="cd05248">
    <property type="entry name" value="ADP_GME_SDR_e"/>
    <property type="match status" value="1"/>
</dbReference>
<dbReference type="Gene3D" id="3.40.50.720">
    <property type="entry name" value="NAD(P)-binding Rossmann-like Domain"/>
    <property type="match status" value="1"/>
</dbReference>
<dbReference type="Gene3D" id="3.90.25.10">
    <property type="entry name" value="UDP-galactose 4-epimerase, domain 1"/>
    <property type="match status" value="1"/>
</dbReference>
<dbReference type="HAMAP" id="MF_01601">
    <property type="entry name" value="Heptose_epimerase"/>
    <property type="match status" value="1"/>
</dbReference>
<dbReference type="InterPro" id="IPR001509">
    <property type="entry name" value="Epimerase_deHydtase"/>
</dbReference>
<dbReference type="InterPro" id="IPR011912">
    <property type="entry name" value="Heptose_epim"/>
</dbReference>
<dbReference type="InterPro" id="IPR036291">
    <property type="entry name" value="NAD(P)-bd_dom_sf"/>
</dbReference>
<dbReference type="NCBIfam" id="TIGR02197">
    <property type="entry name" value="heptose_epim"/>
    <property type="match status" value="1"/>
</dbReference>
<dbReference type="NCBIfam" id="NF008360">
    <property type="entry name" value="PRK11150.1"/>
    <property type="match status" value="1"/>
</dbReference>
<dbReference type="PANTHER" id="PTHR43103:SF3">
    <property type="entry name" value="ADP-L-GLYCERO-D-MANNO-HEPTOSE-6-EPIMERASE"/>
    <property type="match status" value="1"/>
</dbReference>
<dbReference type="PANTHER" id="PTHR43103">
    <property type="entry name" value="NUCLEOSIDE-DIPHOSPHATE-SUGAR EPIMERASE"/>
    <property type="match status" value="1"/>
</dbReference>
<dbReference type="Pfam" id="PF01370">
    <property type="entry name" value="Epimerase"/>
    <property type="match status" value="1"/>
</dbReference>
<dbReference type="SUPFAM" id="SSF51735">
    <property type="entry name" value="NAD(P)-binding Rossmann-fold domains"/>
    <property type="match status" value="1"/>
</dbReference>
<accession>P67910</accession>
<accession>P17963</accession>
<accession>Q2M7T3</accession>
<evidence type="ECO:0000269" key="1">
    <source>
    </source>
</evidence>
<evidence type="ECO:0000269" key="2">
    <source>
    </source>
</evidence>
<evidence type="ECO:0000269" key="3">
    <source>
    </source>
</evidence>
<evidence type="ECO:0000269" key="4">
    <source>
    </source>
</evidence>
<evidence type="ECO:0000269" key="5">
    <source>
    </source>
</evidence>
<evidence type="ECO:0000269" key="6">
    <source>
    </source>
</evidence>
<evidence type="ECO:0000305" key="7"/>
<evidence type="ECO:0000305" key="8">
    <source>
    </source>
</evidence>
<evidence type="ECO:0007829" key="9">
    <source>
        <dbReference type="PDB" id="1EQ2"/>
    </source>
</evidence>
<evidence type="ECO:0007829" key="10">
    <source>
        <dbReference type="PDB" id="2X6T"/>
    </source>
</evidence>
<protein>
    <recommendedName>
        <fullName>ADP-L-glycero-D-manno-heptose-6-epimerase</fullName>
        <ecNumber evidence="6">5.1.3.20</ecNumber>
    </recommendedName>
    <alternativeName>
        <fullName>ADP-L-glycero-beta-D-manno-heptose-6-epimerase</fullName>
        <shortName>ADP-glyceromanno-heptose 6-epimerase</shortName>
        <shortName>ADP-hep 6-epimerase</shortName>
        <shortName>AGME</shortName>
    </alternativeName>
</protein>
<keyword id="KW-0002">3D-structure</keyword>
<keyword id="KW-0007">Acetylation</keyword>
<keyword id="KW-0119">Carbohydrate metabolism</keyword>
<keyword id="KW-0903">Direct protein sequencing</keyword>
<keyword id="KW-0413">Isomerase</keyword>
<keyword id="KW-0448">Lipopolysaccharide biosynthesis</keyword>
<keyword id="KW-0520">NAD</keyword>
<keyword id="KW-0521">NADP</keyword>
<keyword id="KW-1185">Reference proteome</keyword>
<keyword id="KW-0346">Stress response</keyword>
<name>HLDD_ECOLI</name>
<gene>
    <name type="primary">hldD</name>
    <name type="synonym">htrM</name>
    <name type="synonym">rfaD</name>
    <name type="synonym">waaD</name>
    <name type="ordered locus">b3619</name>
    <name type="ordered locus">JW3594</name>
</gene>
<organism>
    <name type="scientific">Escherichia coli (strain K12)</name>
    <dbReference type="NCBI Taxonomy" id="83333"/>
    <lineage>
        <taxon>Bacteria</taxon>
        <taxon>Pseudomonadati</taxon>
        <taxon>Pseudomonadota</taxon>
        <taxon>Gammaproteobacteria</taxon>
        <taxon>Enterobacterales</taxon>
        <taxon>Enterobacteriaceae</taxon>
        <taxon>Escherichia</taxon>
    </lineage>
</organism>
<feature type="chain" id="PRO_0000205793" description="ADP-L-glycero-D-manno-heptose-6-epimerase">
    <location>
        <begin position="1"/>
        <end position="310"/>
    </location>
</feature>
<feature type="active site" description="Proton acceptor" evidence="3">
    <location>
        <position position="140"/>
    </location>
</feature>
<feature type="active site" description="Proton acceptor" evidence="3">
    <location>
        <position position="178"/>
    </location>
</feature>
<feature type="binding site" evidence="1">
    <location>
        <begin position="10"/>
        <end position="11"/>
    </location>
    <ligand>
        <name>NADP(+)</name>
        <dbReference type="ChEBI" id="CHEBI:58349"/>
    </ligand>
</feature>
<feature type="binding site" evidence="1">
    <location>
        <begin position="31"/>
        <end position="32"/>
    </location>
    <ligand>
        <name>NADP(+)</name>
        <dbReference type="ChEBI" id="CHEBI:58349"/>
    </ligand>
</feature>
<feature type="binding site" evidence="1">
    <location>
        <position position="38"/>
    </location>
    <ligand>
        <name>NADP(+)</name>
        <dbReference type="ChEBI" id="CHEBI:58349"/>
    </ligand>
</feature>
<feature type="binding site" evidence="1">
    <location>
        <position position="53"/>
    </location>
    <ligand>
        <name>NADP(+)</name>
        <dbReference type="ChEBI" id="CHEBI:58349"/>
    </ligand>
</feature>
<feature type="binding site" evidence="1">
    <location>
        <begin position="75"/>
        <end position="79"/>
    </location>
    <ligand>
        <name>NADP(+)</name>
        <dbReference type="ChEBI" id="CHEBI:58349"/>
    </ligand>
</feature>
<feature type="binding site" evidence="1">
    <location>
        <position position="92"/>
    </location>
    <ligand>
        <name>NADP(+)</name>
        <dbReference type="ChEBI" id="CHEBI:58349"/>
    </ligand>
</feature>
<feature type="binding site" evidence="1">
    <location>
        <position position="144"/>
    </location>
    <ligand>
        <name>NADP(+)</name>
        <dbReference type="ChEBI" id="CHEBI:58349"/>
    </ligand>
</feature>
<feature type="binding site" evidence="1">
    <location>
        <position position="169"/>
    </location>
    <ligand>
        <name>substrate</name>
    </ligand>
</feature>
<feature type="binding site" evidence="1">
    <location>
        <position position="170"/>
    </location>
    <ligand>
        <name>NADP(+)</name>
        <dbReference type="ChEBI" id="CHEBI:58349"/>
    </ligand>
</feature>
<feature type="binding site" evidence="1">
    <location>
        <position position="178"/>
    </location>
    <ligand>
        <name>NADP(+)</name>
        <dbReference type="ChEBI" id="CHEBI:58349"/>
    </ligand>
</feature>
<feature type="binding site" evidence="1">
    <location>
        <position position="180"/>
    </location>
    <ligand>
        <name>substrate</name>
    </ligand>
</feature>
<feature type="binding site" evidence="1">
    <location>
        <position position="187"/>
    </location>
    <ligand>
        <name>substrate</name>
    </ligand>
</feature>
<feature type="binding site" evidence="1">
    <location>
        <begin position="201"/>
        <end position="204"/>
    </location>
    <ligand>
        <name>substrate</name>
    </ligand>
</feature>
<feature type="binding site" evidence="1">
    <location>
        <position position="209"/>
    </location>
    <ligand>
        <name>substrate</name>
    </ligand>
</feature>
<feature type="binding site" evidence="1">
    <location>
        <position position="272"/>
    </location>
    <ligand>
        <name>substrate</name>
    </ligand>
</feature>
<feature type="modified residue" description="N6-acetyllysine" evidence="4">
    <location>
        <position position="267"/>
    </location>
</feature>
<feature type="mutagenesis site" description="Severely compromises epimerase activity." evidence="3">
    <original>Y</original>
    <variation>F</variation>
    <location>
        <position position="140"/>
    </location>
</feature>
<feature type="mutagenesis site" description="Severely compromises epimerase activity." evidence="3">
    <original>K</original>
    <variation>M</variation>
    <location>
        <position position="178"/>
    </location>
</feature>
<feature type="mutagenesis site" description="Activity similar to that of the wild-type." evidence="3">
    <original>K</original>
    <variation>M</variation>
    <location>
        <position position="208"/>
    </location>
</feature>
<feature type="mutagenesis site" description="Activity similar to that of the wild-type." evidence="3">
    <original>D</original>
    <variation>N</variation>
    <location>
        <position position="210"/>
    </location>
</feature>
<feature type="strand" evidence="9">
    <location>
        <begin position="2"/>
        <end position="5"/>
    </location>
</feature>
<feature type="turn" evidence="9">
    <location>
        <begin position="6"/>
        <end position="8"/>
    </location>
</feature>
<feature type="helix" evidence="9">
    <location>
        <begin position="10"/>
        <end position="20"/>
    </location>
</feature>
<feature type="turn" evidence="9">
    <location>
        <begin position="21"/>
        <end position="23"/>
    </location>
</feature>
<feature type="strand" evidence="9">
    <location>
        <begin position="27"/>
        <end position="31"/>
    </location>
</feature>
<feature type="helix" evidence="9">
    <location>
        <begin position="36"/>
        <end position="39"/>
    </location>
</feature>
<feature type="helix" evidence="9">
    <location>
        <begin position="40"/>
        <end position="43"/>
    </location>
</feature>
<feature type="strand" evidence="9">
    <location>
        <begin position="48"/>
        <end position="52"/>
    </location>
</feature>
<feature type="helix" evidence="9">
    <location>
        <begin position="53"/>
        <end position="61"/>
    </location>
</feature>
<feature type="strand" evidence="9">
    <location>
        <begin position="71"/>
        <end position="74"/>
    </location>
</feature>
<feature type="helix" evidence="9">
    <location>
        <begin position="86"/>
        <end position="92"/>
    </location>
</feature>
<feature type="helix" evidence="9">
    <location>
        <begin position="94"/>
        <end position="107"/>
    </location>
</feature>
<feature type="strand" evidence="9">
    <location>
        <begin position="111"/>
        <end position="116"/>
    </location>
</feature>
<feature type="helix" evidence="9">
    <location>
        <begin position="117"/>
        <end position="120"/>
    </location>
</feature>
<feature type="helix" evidence="9">
    <location>
        <begin position="131"/>
        <end position="133"/>
    </location>
</feature>
<feature type="helix" evidence="9">
    <location>
        <begin position="139"/>
        <end position="154"/>
    </location>
</feature>
<feature type="helix" evidence="9">
    <location>
        <begin position="155"/>
        <end position="157"/>
    </location>
</feature>
<feature type="strand" evidence="9">
    <location>
        <begin position="162"/>
        <end position="167"/>
    </location>
</feature>
<feature type="strand" evidence="9">
    <location>
        <begin position="169"/>
        <end position="174"/>
    </location>
</feature>
<feature type="helix" evidence="9">
    <location>
        <begin position="176"/>
        <end position="181"/>
    </location>
</feature>
<feature type="helix" evidence="9">
    <location>
        <begin position="184"/>
        <end position="193"/>
    </location>
</feature>
<feature type="strand" evidence="9">
    <location>
        <begin position="199"/>
        <end position="203"/>
    </location>
</feature>
<feature type="helix" evidence="10">
    <location>
        <begin position="204"/>
        <end position="206"/>
    </location>
</feature>
<feature type="strand" evidence="9">
    <location>
        <begin position="211"/>
        <end position="213"/>
    </location>
</feature>
<feature type="helix" evidence="9">
    <location>
        <begin position="214"/>
        <end position="227"/>
    </location>
</feature>
<feature type="strand" evidence="9">
    <location>
        <begin position="231"/>
        <end position="236"/>
    </location>
</feature>
<feature type="helix" evidence="9">
    <location>
        <begin position="243"/>
        <end position="249"/>
    </location>
</feature>
<feature type="helix" evidence="9">
    <location>
        <begin position="251"/>
        <end position="254"/>
    </location>
</feature>
<feature type="strand" evidence="9">
    <location>
        <begin position="260"/>
        <end position="262"/>
    </location>
</feature>
<feature type="helix" evidence="9">
    <location>
        <begin position="266"/>
        <end position="268"/>
    </location>
</feature>
<feature type="turn" evidence="9">
    <location>
        <begin position="269"/>
        <end position="271"/>
    </location>
</feature>
<feature type="helix" evidence="9">
    <location>
        <begin position="281"/>
        <end position="285"/>
    </location>
</feature>
<feature type="helix" evidence="9">
    <location>
        <begin position="295"/>
        <end position="305"/>
    </location>
</feature>
<comment type="function">
    <text evidence="5 6">Catalyzes the interconversion between ADP-D-glycero-beta-D-manno-heptose and ADP-L-glycero-beta-D-manno-heptose via an epimerization at carbon 6 of the heptose.</text>
</comment>
<comment type="catalytic activity">
    <reaction evidence="6">
        <text>ADP-D-glycero-beta-D-manno-heptose = ADP-L-glycero-beta-D-manno-heptose</text>
        <dbReference type="Rhea" id="RHEA:17577"/>
        <dbReference type="ChEBI" id="CHEBI:59967"/>
        <dbReference type="ChEBI" id="CHEBI:61506"/>
        <dbReference type="EC" id="5.1.3.20"/>
    </reaction>
</comment>
<comment type="cofactor">
    <cofactor evidence="2 6">
        <name>NADP(+)</name>
        <dbReference type="ChEBI" id="CHEBI:58349"/>
    </cofactor>
    <cofactor evidence="2 6">
        <name>NAD(+)</name>
        <dbReference type="ChEBI" id="CHEBI:57540"/>
    </cofactor>
    <text evidence="2 6">Binds 1 NADP(+) per subunit. NAD(+) can substitute for NADP(+), but enzymatic activity is reduced.</text>
</comment>
<comment type="activity regulation">
    <text>Completely inhibited by ADP and ADP-glucose, and partially inhibited by ATP and NADH.</text>
</comment>
<comment type="biophysicochemical properties">
    <kinetics>
        <KM evidence="6">0.1 mM for ADP-heptose</KM>
        <Vmax evidence="6">1.53 umol/min/mg enzyme</Vmax>
    </kinetics>
    <phDependence>
        <text evidence="6">Optimum pH is 5.5-9.5.</text>
    </phDependence>
    <temperatureDependence>
        <text evidence="6">Optimum temperature is 42 degrees Celsius.</text>
    </temperatureDependence>
</comment>
<comment type="pathway">
    <text>Nucleotide-sugar biosynthesis; ADP-L-glycero-beta-D-manno-heptose biosynthesis; ADP-L-glycero-beta-D-manno-heptose from D-glycero-beta-D-manno-heptose 7-phosphate: step 4/4.</text>
</comment>
<comment type="pathway">
    <text>Bacterial outer membrane biogenesis; LPS core biosynthesis.</text>
</comment>
<comment type="subunit">
    <text evidence="1 6">Homopentamer.</text>
</comment>
<comment type="interaction">
    <interactant intactId="EBI-543760">
        <id>P67910</id>
    </interactant>
    <interactant intactId="EBI-552904">
        <id>P16528</id>
        <label>iclR</label>
    </interactant>
    <organismsDiffer>false</organismsDiffer>
    <experiments>2</experiments>
</comment>
<comment type="interaction">
    <interactant intactId="EBI-543760">
        <id>P67910</id>
    </interactant>
    <interactant intactId="EBI-562321">
        <id>P62617</id>
        <label>ispF</label>
    </interactant>
    <organismsDiffer>false</organismsDiffer>
    <experiments>2</experiments>
</comment>
<comment type="interaction">
    <interactant intactId="EBI-543760">
        <id>P67910</id>
    </interactant>
    <interactant intactId="EBI-554195">
        <id>P0ABU0</id>
        <label>menB</label>
    </interactant>
    <organismsDiffer>false</organismsDiffer>
    <experiments>3</experiments>
</comment>
<comment type="interaction">
    <interactant intactId="EBI-543760">
        <id>P67910</id>
    </interactant>
    <interactant intactId="EBI-559377">
        <id>P25534</id>
        <label>ubiH</label>
    </interactant>
    <organismsDiffer>false</organismsDiffer>
    <experiments>2</experiments>
</comment>
<comment type="interaction">
    <interactant intactId="EBI-543760">
        <id>P67910</id>
    </interactant>
    <interactant intactId="EBI-544395">
        <id>P0A8C1</id>
        <label>ybjQ</label>
    </interactant>
    <organismsDiffer>false</organismsDiffer>
    <experiments>2</experiments>
</comment>
<comment type="induction">
    <text>By heat shock.</text>
</comment>
<comment type="domain">
    <text>Contains a large N-terminal NADP-binding domain associated with a modified Rossman fold, and a smaller C-terminal substrate-binding domain.</text>
</comment>
<comment type="miscellaneous">
    <text>Essential for E.coli viability at elevated temperatures. Insertional inactivation of the gene by the Tn5 transposon results in E.coli being unable to form colonies at temperatures above 43 degrees Celsius.</text>
</comment>
<comment type="similarity">
    <text evidence="7">Belongs to the NAD(P)-dependent epimerase/dehydratase family. HldD subfamily.</text>
</comment>
<comment type="caution">
    <text evidence="8">Was originally thought to be a homohexamer.</text>
</comment>
<sequence>MIIVTGGAGFIGSNIVKALNDKGITDILVVDNLKDGTKFVNLVDLNIADYMDKEDFLIQIMAGEEFGDVEAIFHEGACSSTTEWDGKYMMDNNYQYSKELLHYCLEREIPFLYASSAATYGGRTSDFIESREYEKPLNVYGYSKFLFDEYVRQILPEANSQIVGFRYFNVYGPREGHKGSMASVAFHLNTQLNNGESPKLFEGSENFKRDFVYVGDVADVNLWFLENGVSGIFNLGTGRAESFQAVADATLAYHKKGQIEYIPFPDKLKGRYQAFTQADLTNLRAAGYDKPFKTVAEGVTEYMAWLNRDA</sequence>
<reference key="1">
    <citation type="journal article" date="1990" name="J. Bacteriol.">
        <title>Cloning, expression, and characterization of the Escherichia coli K-12 rfaD gene.</title>
        <authorList>
            <person name="Pegues J.C."/>
            <person name="Chen L."/>
            <person name="Gordon A.W."/>
            <person name="Ding L."/>
            <person name="Coleman W.G. Jr."/>
        </authorList>
    </citation>
    <scope>NUCLEOTIDE SEQUENCE [GENOMIC DNA]</scope>
    <scope>PROTEIN SEQUENCE OF 1-34</scope>
    <source>
        <strain>K12</strain>
    </source>
</reference>
<reference key="2">
    <citation type="journal article" date="1991" name="Nucleic Acids Res.">
        <title>The htrM gene, whose product is essential for Escherichia coli viability only at elevated temperatures, is identical to the rfaD gene.</title>
        <authorList>
            <person name="Raina S."/>
            <person name="Georgopoulos C."/>
        </authorList>
    </citation>
    <scope>NUCLEOTIDE SEQUENCE [GENOMIC DNA]</scope>
    <source>
        <strain>K12</strain>
    </source>
</reference>
<reference key="3">
    <citation type="journal article" date="1994" name="Nucleic Acids Res.">
        <title>Analysis of the Escherichia coli genome. V. DNA sequence of the region from 76.0 to 81.5 minutes.</title>
        <authorList>
            <person name="Sofia H.J."/>
            <person name="Burland V."/>
            <person name="Daniels D.L."/>
            <person name="Plunkett G. III"/>
            <person name="Blattner F.R."/>
        </authorList>
    </citation>
    <scope>NUCLEOTIDE SEQUENCE [LARGE SCALE GENOMIC DNA]</scope>
    <source>
        <strain>K12 / MG1655 / ATCC 47076</strain>
    </source>
</reference>
<reference key="4">
    <citation type="journal article" date="1997" name="Science">
        <title>The complete genome sequence of Escherichia coli K-12.</title>
        <authorList>
            <person name="Blattner F.R."/>
            <person name="Plunkett G. III"/>
            <person name="Bloch C.A."/>
            <person name="Perna N.T."/>
            <person name="Burland V."/>
            <person name="Riley M."/>
            <person name="Collado-Vides J."/>
            <person name="Glasner J.D."/>
            <person name="Rode C.K."/>
            <person name="Mayhew G.F."/>
            <person name="Gregor J."/>
            <person name="Davis N.W."/>
            <person name="Kirkpatrick H.A."/>
            <person name="Goeden M.A."/>
            <person name="Rose D.J."/>
            <person name="Mau B."/>
            <person name="Shao Y."/>
        </authorList>
    </citation>
    <scope>NUCLEOTIDE SEQUENCE [LARGE SCALE GENOMIC DNA]</scope>
    <source>
        <strain>K12 / MG1655 / ATCC 47076</strain>
    </source>
</reference>
<reference key="5">
    <citation type="journal article" date="2006" name="Mol. Syst. Biol.">
        <title>Highly accurate genome sequences of Escherichia coli K-12 strains MG1655 and W3110.</title>
        <authorList>
            <person name="Hayashi K."/>
            <person name="Morooka N."/>
            <person name="Yamamoto Y."/>
            <person name="Fujita K."/>
            <person name="Isono K."/>
            <person name="Choi S."/>
            <person name="Ohtsubo E."/>
            <person name="Baba T."/>
            <person name="Wanner B.L."/>
            <person name="Mori H."/>
            <person name="Horiuchi T."/>
        </authorList>
    </citation>
    <scope>NUCLEOTIDE SEQUENCE [LARGE SCALE GENOMIC DNA]</scope>
    <source>
        <strain>K12 / W3110 / ATCC 27325 / DSM 5911</strain>
    </source>
</reference>
<reference key="6">
    <citation type="journal article" date="1997" name="Electrophoresis">
        <title>Comparing the predicted and observed properties of proteins encoded in the genome of Escherichia coli K-12.</title>
        <authorList>
            <person name="Link A.J."/>
            <person name="Robison K."/>
            <person name="Church G.M."/>
        </authorList>
    </citation>
    <scope>PROTEIN SEQUENCE OF 1-12</scope>
    <source>
        <strain>K12 / EMG2</strain>
    </source>
</reference>
<reference key="7">
    <citation type="submission" date="1996-02" db="UniProtKB">
        <authorList>
            <person name="Frutiger S."/>
            <person name="Hughes G.J."/>
            <person name="Pasquali C."/>
            <person name="Hochstrasser D.F."/>
        </authorList>
    </citation>
    <scope>PROTEIN SEQUENCE OF 1-11</scope>
    <source>
        <strain>K12 / W3110 / ATCC 27325 / DSM 5911</strain>
    </source>
</reference>
<reference key="8">
    <citation type="journal article" date="1994" name="J. Biol. Chem.">
        <title>Purification and properties of the Escherichia coli K-12 NAD-dependent nucleotide diphosphosugar epimerase, ADP-L-glycero-D-mannoheptose 6-epimerase.</title>
        <authorList>
            <person name="Ding L."/>
            <person name="Seto B.L."/>
            <person name="Ahmed S.A."/>
            <person name="Coleman W.G. Jr."/>
        </authorList>
    </citation>
    <scope>FUNCTION</scope>
    <scope>CATALYTIC ACTIVITY</scope>
    <scope>BIOPHYSICOCHEMICAL PROPERTIES</scope>
    <scope>SUBUNIT</scope>
    <scope>COFACTOR</scope>
    <source>
        <strain>K12</strain>
    </source>
</reference>
<reference key="9">
    <citation type="journal article" date="1983" name="J. Biol. Chem.">
        <title>The rfaD gene codes for ADP-L-glycero-D-mannoheptose-6-epimerase. An enzyme required for lipopolysaccharide core biosynthesis.</title>
        <authorList>
            <person name="Coleman W.G. Jr."/>
        </authorList>
    </citation>
    <scope>FUNCTION</scope>
    <source>
        <strain>K12</strain>
    </source>
</reference>
<reference key="10">
    <citation type="journal article" date="1999" name="Acta Crystallogr. D">
        <title>Crystallization and preliminary X-ray diffraction studies of the lipopolysaccharide core biosynthetic enzyme ADP-L-glycero-D-mannoheptose 6-epimerase from Escherichia coli K-12.</title>
        <authorList>
            <person name="Ding L."/>
            <person name="Zhang Y."/>
            <person name="Deacon A.M."/>
            <person name="Ealick S.E."/>
            <person name="Ni Y.S."/>
            <person name="Sun P."/>
            <person name="Coleman W.G. Jr."/>
        </authorList>
    </citation>
    <scope>CRYSTALLIZATION</scope>
</reference>
<reference key="11">
    <citation type="journal article" date="2001" name="J. Biol. Chem.">
        <title>Evidence that NADP+ is the physiological cofactor of ADP-L-glycero-D-mannoheptose 6-epimerase.</title>
        <authorList>
            <person name="Ni Y.S."/>
            <person name="McPhie P."/>
            <person name="Deacon A.M."/>
            <person name="Ealick S.E."/>
            <person name="Coleman W.G. Jr."/>
        </authorList>
    </citation>
    <scope>COFACTOR</scope>
</reference>
<reference key="12">
    <citation type="journal article" date="2002" name="J. Bacteriol.">
        <title>Biosynthesis pathway of ADP-L-glycero-beta-D-manno-heptose in Escherichia coli.</title>
        <authorList>
            <person name="Kneidinger B."/>
            <person name="Marolda C."/>
            <person name="Graninger M."/>
            <person name="Zamyatina A."/>
            <person name="McArthur F."/>
            <person name="Kosma P."/>
            <person name="Valvano M.A."/>
            <person name="Messner P."/>
        </authorList>
    </citation>
    <scope>ADP-L-GLYCERO-BETA-D-MANNO-HEPTOSE BIOSYNTHESIS PATHWAY</scope>
    <source>
        <strain>K12 / MG1655 / ATCC 47076</strain>
    </source>
</reference>
<reference key="13">
    <citation type="journal article" date="2007" name="Biochemistry">
        <title>A two-base mechanism for Escherichia coli ADP-L-glycero-D-manno-heptose 6-epimerase.</title>
        <authorList>
            <person name="Morrison J.P."/>
            <person name="Tanner M.E."/>
        </authorList>
    </citation>
    <scope>MUTAGENESIS OF TYR-140; LYS-178; LYS-208 AND ASP-210</scope>
    <scope>REACTION MECHANISM</scope>
    <scope>ACTIVE SITE</scope>
</reference>
<reference key="14">
    <citation type="journal article" date="2009" name="Mol. Cell. Proteomics">
        <title>Lysine acetylation is a highly abundant and evolutionarily conserved modification in Escherichia coli.</title>
        <authorList>
            <person name="Zhang J."/>
            <person name="Sprung R."/>
            <person name="Pei J."/>
            <person name="Tan X."/>
            <person name="Kim S."/>
            <person name="Zhu H."/>
            <person name="Liu C.F."/>
            <person name="Grishin N.V."/>
            <person name="Zhao Y."/>
        </authorList>
    </citation>
    <scope>ACETYLATION [LARGE SCALE ANALYSIS] AT LYS-267</scope>
    <scope>IDENTIFICATION BY MASS SPECTROMETRY</scope>
    <source>
        <strain>K12 / JW1106</strain>
        <strain>K12 / MG1655 / ATCC 47076</strain>
    </source>
</reference>
<reference key="15">
    <citation type="journal article" date="2000" name="Structure">
        <title>The crystal structure of ADP-L-glycero-D-mannoheptose 6-epimerase: catalysis with a twist.</title>
        <authorList>
            <person name="Deacon A.M."/>
            <person name="Ni Y.S."/>
            <person name="Coleman W.G. Jr."/>
            <person name="Ealick S.E."/>
        </authorList>
    </citation>
    <scope>X-RAY CRYSTALLOGRAPHY (2.0 ANGSTROMS) OF COMPLEX WITH NADP AND ADP-GLUCOSE</scope>
    <scope>SUBUNIT</scope>
</reference>
<proteinExistence type="evidence at protein level"/>